<sequence>MAATSAQHIGLQGHGTSRNDRDRRLVRYWLYAVFAVLIAIVMVGGATRMTGSGLSITEWKPIHGVIPPLNHAEWVEEFEKYQQIPQYQQINKGMSLAEFQYIFWWEWAHRLLARFVGFLVAVPLGFFWLTGRLKGGLKYRMLGLLALGGLQGAIGWWMVASGLSELTSVSQYRLAIHLTTACVIITAVFYIARGLVTYSERPAERSIQRFAGWIVFAVLVQIYLGGLVAGLHAGLTYNTWPLMDGAIIPSDLFTQAPWWRNLFENPKTVQFVHRMFAYTVLLLAILHAVQVWKNAPGTTHARRTIVLVGLVFIQAMIGIATLLMSAPLHLGLTHQFFALVVLAFAVAHWRATKGAYAA</sequence>
<evidence type="ECO:0000255" key="1">
    <source>
        <dbReference type="HAMAP-Rule" id="MF_01665"/>
    </source>
</evidence>
<protein>
    <recommendedName>
        <fullName evidence="1">Heme A synthase</fullName>
        <shortName evidence="1">HAS</shortName>
        <ecNumber evidence="1">1.17.99.9</ecNumber>
    </recommendedName>
    <alternativeName>
        <fullName evidence="1">Cytochrome aa3-controlling protein</fullName>
    </alternativeName>
</protein>
<dbReference type="EC" id="1.17.99.9" evidence="1"/>
<dbReference type="EMBL" id="CP000887">
    <property type="protein sequence ID" value="ACD72279.1"/>
    <property type="molecule type" value="Genomic_DNA"/>
</dbReference>
<dbReference type="RefSeq" id="WP_002969419.1">
    <property type="nucleotide sequence ID" value="NC_010742.1"/>
</dbReference>
<dbReference type="SMR" id="B2S532"/>
<dbReference type="KEGG" id="bmc:BAbS19_I07550"/>
<dbReference type="HOGENOM" id="CLU_017627_0_0_5"/>
<dbReference type="UniPathway" id="UPA00269">
    <property type="reaction ID" value="UER00713"/>
</dbReference>
<dbReference type="Proteomes" id="UP000002565">
    <property type="component" value="Chromosome 1"/>
</dbReference>
<dbReference type="GO" id="GO:0005886">
    <property type="term" value="C:plasma membrane"/>
    <property type="evidence" value="ECO:0007669"/>
    <property type="project" value="UniProtKB-SubCell"/>
</dbReference>
<dbReference type="GO" id="GO:0046872">
    <property type="term" value="F:metal ion binding"/>
    <property type="evidence" value="ECO:0007669"/>
    <property type="project" value="UniProtKB-KW"/>
</dbReference>
<dbReference type="GO" id="GO:0016653">
    <property type="term" value="F:oxidoreductase activity, acting on NAD(P)H, heme protein as acceptor"/>
    <property type="evidence" value="ECO:0007669"/>
    <property type="project" value="InterPro"/>
</dbReference>
<dbReference type="GO" id="GO:0006784">
    <property type="term" value="P:heme A biosynthetic process"/>
    <property type="evidence" value="ECO:0007669"/>
    <property type="project" value="UniProtKB-UniRule"/>
</dbReference>
<dbReference type="HAMAP" id="MF_01665">
    <property type="entry name" value="HemeA_synth_type2"/>
    <property type="match status" value="1"/>
</dbReference>
<dbReference type="InterPro" id="IPR003780">
    <property type="entry name" value="COX15/CtaA_fam"/>
</dbReference>
<dbReference type="InterPro" id="IPR023754">
    <property type="entry name" value="HemeA_Synthase_type2"/>
</dbReference>
<dbReference type="PANTHER" id="PTHR23289">
    <property type="entry name" value="CYTOCHROME C OXIDASE ASSEMBLY PROTEIN COX15"/>
    <property type="match status" value="1"/>
</dbReference>
<dbReference type="PANTHER" id="PTHR23289:SF2">
    <property type="entry name" value="CYTOCHROME C OXIDASE ASSEMBLY PROTEIN COX15 HOMOLOG"/>
    <property type="match status" value="1"/>
</dbReference>
<dbReference type="Pfam" id="PF02628">
    <property type="entry name" value="COX15-CtaA"/>
    <property type="match status" value="1"/>
</dbReference>
<gene>
    <name evidence="1" type="primary">ctaA</name>
    <name type="ordered locus">BAbS19_I07550</name>
</gene>
<organism>
    <name type="scientific">Brucella abortus (strain S19)</name>
    <dbReference type="NCBI Taxonomy" id="430066"/>
    <lineage>
        <taxon>Bacteria</taxon>
        <taxon>Pseudomonadati</taxon>
        <taxon>Pseudomonadota</taxon>
        <taxon>Alphaproteobacteria</taxon>
        <taxon>Hyphomicrobiales</taxon>
        <taxon>Brucellaceae</taxon>
        <taxon>Brucella/Ochrobactrum group</taxon>
        <taxon>Brucella</taxon>
    </lineage>
</organism>
<accession>B2S532</accession>
<keyword id="KW-1003">Cell membrane</keyword>
<keyword id="KW-0350">Heme biosynthesis</keyword>
<keyword id="KW-0408">Iron</keyword>
<keyword id="KW-0472">Membrane</keyword>
<keyword id="KW-0479">Metal-binding</keyword>
<keyword id="KW-0560">Oxidoreductase</keyword>
<keyword id="KW-0812">Transmembrane</keyword>
<keyword id="KW-1133">Transmembrane helix</keyword>
<name>CTAA_BRUA1</name>
<feature type="chain" id="PRO_1000187248" description="Heme A synthase">
    <location>
        <begin position="1"/>
        <end position="358"/>
    </location>
</feature>
<feature type="transmembrane region" description="Helical" evidence="1">
    <location>
        <begin position="25"/>
        <end position="45"/>
    </location>
</feature>
<feature type="transmembrane region" description="Helical" evidence="1">
    <location>
        <begin position="111"/>
        <end position="131"/>
    </location>
</feature>
<feature type="transmembrane region" description="Helical" evidence="1">
    <location>
        <begin position="141"/>
        <end position="161"/>
    </location>
</feature>
<feature type="transmembrane region" description="Helical" evidence="1">
    <location>
        <begin position="176"/>
        <end position="196"/>
    </location>
</feature>
<feature type="transmembrane region" description="Helical" evidence="1">
    <location>
        <begin position="210"/>
        <end position="230"/>
    </location>
</feature>
<feature type="transmembrane region" description="Helical" evidence="1">
    <location>
        <begin position="269"/>
        <end position="289"/>
    </location>
</feature>
<feature type="transmembrane region" description="Helical" evidence="1">
    <location>
        <begin position="304"/>
        <end position="324"/>
    </location>
</feature>
<feature type="transmembrane region" description="Helical" evidence="1">
    <location>
        <begin position="326"/>
        <end position="346"/>
    </location>
</feature>
<feature type="binding site" description="axial binding residue" evidence="1">
    <location>
        <position position="273"/>
    </location>
    <ligand>
        <name>heme</name>
        <dbReference type="ChEBI" id="CHEBI:30413"/>
    </ligand>
    <ligandPart>
        <name>Fe</name>
        <dbReference type="ChEBI" id="CHEBI:18248"/>
    </ligandPart>
</feature>
<feature type="binding site" description="axial binding residue" evidence="1">
    <location>
        <position position="334"/>
    </location>
    <ligand>
        <name>heme</name>
        <dbReference type="ChEBI" id="CHEBI:30413"/>
    </ligand>
    <ligandPart>
        <name>Fe</name>
        <dbReference type="ChEBI" id="CHEBI:18248"/>
    </ligandPart>
</feature>
<reference key="1">
    <citation type="journal article" date="2008" name="PLoS ONE">
        <title>Genome sequence of Brucella abortus vaccine strain S19 compared to virulent strains yields candidate virulence genes.</title>
        <authorList>
            <person name="Crasta O.R."/>
            <person name="Folkerts O."/>
            <person name="Fei Z."/>
            <person name="Mane S.P."/>
            <person name="Evans C."/>
            <person name="Martino-Catt S."/>
            <person name="Bricker B."/>
            <person name="Yu G."/>
            <person name="Du L."/>
            <person name="Sobral B.W."/>
        </authorList>
    </citation>
    <scope>NUCLEOTIDE SEQUENCE [LARGE SCALE GENOMIC DNA]</scope>
    <source>
        <strain>S19</strain>
    </source>
</reference>
<comment type="function">
    <text evidence="1">Catalyzes the conversion of heme O to heme A by two successive hydroxylations of the methyl group at C8. The first hydroxylation forms heme I, the second hydroxylation results in an unstable dihydroxymethyl group, which spontaneously dehydrates, resulting in the formyl group of heme A.</text>
</comment>
<comment type="catalytic activity">
    <reaction evidence="1">
        <text>Fe(II)-heme o + 2 A + H2O = Fe(II)-heme a + 2 AH2</text>
        <dbReference type="Rhea" id="RHEA:63388"/>
        <dbReference type="ChEBI" id="CHEBI:13193"/>
        <dbReference type="ChEBI" id="CHEBI:15377"/>
        <dbReference type="ChEBI" id="CHEBI:17499"/>
        <dbReference type="ChEBI" id="CHEBI:60530"/>
        <dbReference type="ChEBI" id="CHEBI:61715"/>
        <dbReference type="EC" id="1.17.99.9"/>
    </reaction>
    <physiologicalReaction direction="left-to-right" evidence="1">
        <dbReference type="Rhea" id="RHEA:63389"/>
    </physiologicalReaction>
</comment>
<comment type="cofactor">
    <cofactor evidence="1">
        <name>heme b</name>
        <dbReference type="ChEBI" id="CHEBI:60344"/>
    </cofactor>
</comment>
<comment type="pathway">
    <text evidence="1">Porphyrin-containing compound metabolism; heme A biosynthesis; heme A from heme O: step 1/1.</text>
</comment>
<comment type="subunit">
    <text evidence="1">Interacts with CtaB.</text>
</comment>
<comment type="subcellular location">
    <subcellularLocation>
        <location evidence="1">Cell membrane</location>
        <topology evidence="1">Multi-pass membrane protein</topology>
    </subcellularLocation>
</comment>
<comment type="similarity">
    <text evidence="1">Belongs to the COX15/CtaA family. Type 2 subfamily.</text>
</comment>
<proteinExistence type="inferred from homology"/>